<proteinExistence type="evidence at transcript level"/>
<accession>Q2QNE8</accession>
<accession>H2KX55</accession>
<feature type="chain" id="PRO_0000263060" description="Metallothionein-like protein 4B">
    <location>
        <begin position="1"/>
        <end position="79"/>
    </location>
</feature>
<dbReference type="EMBL" id="BE039194">
    <property type="status" value="NOT_ANNOTATED_CDS"/>
    <property type="molecule type" value="mRNA"/>
</dbReference>
<dbReference type="EMBL" id="DP000011">
    <property type="protein sequence ID" value="ABA99636.1"/>
    <property type="molecule type" value="Genomic_DNA"/>
</dbReference>
<dbReference type="EMBL" id="DP000011">
    <property type="protein sequence ID" value="ABG22054.1"/>
    <property type="molecule type" value="Genomic_DNA"/>
</dbReference>
<dbReference type="EMBL" id="AP008218">
    <property type="protein sequence ID" value="BAF30084.2"/>
    <property type="status" value="ALT_SEQ"/>
    <property type="molecule type" value="Genomic_DNA"/>
</dbReference>
<dbReference type="EMBL" id="AP014968">
    <property type="protein sequence ID" value="BAT17713.1"/>
    <property type="molecule type" value="Genomic_DNA"/>
</dbReference>
<dbReference type="EMBL" id="AK243301">
    <property type="status" value="NOT_ANNOTATED_CDS"/>
    <property type="molecule type" value="mRNA"/>
</dbReference>
<dbReference type="RefSeq" id="XP_015619845.1">
    <property type="nucleotide sequence ID" value="XM_015764359.1"/>
</dbReference>
<dbReference type="FunCoup" id="Q2QNE8">
    <property type="interactions" value="73"/>
</dbReference>
<dbReference type="PaxDb" id="39947-Q2QNE8"/>
<dbReference type="EnsemblPlants" id="Os12t0568200-01">
    <property type="protein sequence ID" value="Os12t0568200-01"/>
    <property type="gene ID" value="Os12g0568200"/>
</dbReference>
<dbReference type="Gramene" id="Os12t0568200-01">
    <property type="protein sequence ID" value="Os12t0568200-01"/>
    <property type="gene ID" value="Os12g0568200"/>
</dbReference>
<dbReference type="KEGG" id="dosa:Os12g0568200"/>
<dbReference type="eggNOG" id="KOG4738">
    <property type="taxonomic scope" value="Eukaryota"/>
</dbReference>
<dbReference type="HOGENOM" id="CLU_161105_1_0_1"/>
<dbReference type="InParanoid" id="Q2QNE8"/>
<dbReference type="OMA" id="NEGGCKC"/>
<dbReference type="OrthoDB" id="101391at38820"/>
<dbReference type="Proteomes" id="UP000000763">
    <property type="component" value="Chromosome 12"/>
</dbReference>
<dbReference type="Proteomes" id="UP000059680">
    <property type="component" value="Chromosome 12"/>
</dbReference>
<dbReference type="GO" id="GO:0046872">
    <property type="term" value="F:metal ion binding"/>
    <property type="evidence" value="ECO:0007669"/>
    <property type="project" value="UniProtKB-KW"/>
</dbReference>
<dbReference type="InterPro" id="IPR000347">
    <property type="entry name" value="Metalthion_15p"/>
</dbReference>
<dbReference type="PANTHER" id="PTHR33543">
    <property type="entry name" value="METALLOTHIONEIN-LIKE PROTEIN 2A"/>
    <property type="match status" value="1"/>
</dbReference>
<dbReference type="PANTHER" id="PTHR33543:SF37">
    <property type="entry name" value="METALLOTHIONEIN-LIKE PROTEIN 4B"/>
    <property type="match status" value="1"/>
</dbReference>
<dbReference type="Pfam" id="PF01439">
    <property type="entry name" value="Metallothio_2"/>
    <property type="match status" value="1"/>
</dbReference>
<keyword id="KW-0479">Metal-binding</keyword>
<keyword id="KW-0480">Metal-thiolate cluster</keyword>
<keyword id="KW-1185">Reference proteome</keyword>
<gene>
    <name type="primary">MT4B</name>
    <name type="ordered locus">Os12g0568200</name>
    <name type="ordered locus">LOC_Os12g38051</name>
    <name type="ordered locus">LOC_Os12g38064</name>
</gene>
<protein>
    <recommendedName>
        <fullName>Metallothionein-like protein 4B</fullName>
    </recommendedName>
    <alternativeName>
        <fullName>Class I metallothionein-like protein 4B</fullName>
    </alternativeName>
    <alternativeName>
        <fullName>OsMT-I-4b</fullName>
    </alternativeName>
</protein>
<evidence type="ECO:0000269" key="1">
    <source>
    </source>
</evidence>
<evidence type="ECO:0000305" key="2"/>
<organism>
    <name type="scientific">Oryza sativa subsp. japonica</name>
    <name type="common">Rice</name>
    <dbReference type="NCBI Taxonomy" id="39947"/>
    <lineage>
        <taxon>Eukaryota</taxon>
        <taxon>Viridiplantae</taxon>
        <taxon>Streptophyta</taxon>
        <taxon>Embryophyta</taxon>
        <taxon>Tracheophyta</taxon>
        <taxon>Spermatophyta</taxon>
        <taxon>Magnoliopsida</taxon>
        <taxon>Liliopsida</taxon>
        <taxon>Poales</taxon>
        <taxon>Poaceae</taxon>
        <taxon>BOP clade</taxon>
        <taxon>Oryzoideae</taxon>
        <taxon>Oryzeae</taxon>
        <taxon>Oryzinae</taxon>
        <taxon>Oryza</taxon>
        <taxon>Oryza sativa</taxon>
    </lineage>
</organism>
<reference key="1">
    <citation type="submission" date="2000-06" db="EMBL/GenBank/DDBJ databases">
        <title>Functional genomics of plant stress tolerance.</title>
        <authorList>
            <person name="Bohnert H.J."/>
            <person name="Borchert C."/>
            <person name="Brazille S."/>
            <person name="Brooks J."/>
            <person name="Eaton M."/>
            <person name="Ferrea H."/>
            <person name="Kawasaki S."/>
            <person name="McCollough A."/>
            <person name="Michalowski C.B."/>
            <person name="Palacio C."/>
            <person name="Scara G."/>
            <person name="Wheeler M."/>
            <person name="Zepeda G.R."/>
        </authorList>
    </citation>
    <scope>NUCLEOTIDE SEQUENCE [MRNA]</scope>
    <source>
        <strain>cv. Nipponbare</strain>
        <tissue>Root</tissue>
    </source>
</reference>
<reference key="2">
    <citation type="journal article" date="2005" name="BMC Biol.">
        <title>The sequence of rice chromosomes 11 and 12, rich in disease resistance genes and recent gene duplications.</title>
        <authorList>
            <consortium name="The rice chromosomes 11 and 12 sequencing consortia"/>
        </authorList>
    </citation>
    <scope>NUCLEOTIDE SEQUENCE [LARGE SCALE GENOMIC DNA]</scope>
    <source>
        <strain>cv. Nipponbare</strain>
    </source>
</reference>
<reference key="3">
    <citation type="journal article" date="2005" name="Nature">
        <title>The map-based sequence of the rice genome.</title>
        <authorList>
            <consortium name="International rice genome sequencing project (IRGSP)"/>
        </authorList>
    </citation>
    <scope>NUCLEOTIDE SEQUENCE [LARGE SCALE GENOMIC DNA]</scope>
    <source>
        <strain>cv. Nipponbare</strain>
    </source>
</reference>
<reference key="4">
    <citation type="journal article" date="2008" name="Nucleic Acids Res.">
        <title>The rice annotation project database (RAP-DB): 2008 update.</title>
        <authorList>
            <consortium name="The rice annotation project (RAP)"/>
        </authorList>
    </citation>
    <scope>GENOME REANNOTATION</scope>
    <source>
        <strain>cv. Nipponbare</strain>
    </source>
</reference>
<reference key="5">
    <citation type="journal article" date="2013" name="Rice">
        <title>Improvement of the Oryza sativa Nipponbare reference genome using next generation sequence and optical map data.</title>
        <authorList>
            <person name="Kawahara Y."/>
            <person name="de la Bastide M."/>
            <person name="Hamilton J.P."/>
            <person name="Kanamori H."/>
            <person name="McCombie W.R."/>
            <person name="Ouyang S."/>
            <person name="Schwartz D.C."/>
            <person name="Tanaka T."/>
            <person name="Wu J."/>
            <person name="Zhou S."/>
            <person name="Childs K.L."/>
            <person name="Davidson R.M."/>
            <person name="Lin H."/>
            <person name="Quesada-Ocampo L."/>
            <person name="Vaillancourt B."/>
            <person name="Sakai H."/>
            <person name="Lee S.S."/>
            <person name="Kim J."/>
            <person name="Numa H."/>
            <person name="Itoh T."/>
            <person name="Buell C.R."/>
            <person name="Matsumoto T."/>
        </authorList>
    </citation>
    <scope>GENOME REANNOTATION</scope>
    <source>
        <strain>cv. Nipponbare</strain>
    </source>
</reference>
<reference key="6">
    <citation type="submission" date="2006-10" db="EMBL/GenBank/DDBJ databases">
        <title>Oryza sativa full length cDNA.</title>
        <authorList>
            <consortium name="The rice full-length cDNA consortium"/>
        </authorList>
    </citation>
    <scope>NUCLEOTIDE SEQUENCE [LARGE SCALE MRNA]</scope>
    <source>
        <strain>cv. Nipponbare</strain>
    </source>
</reference>
<reference key="7">
    <citation type="journal article" date="2006" name="J. Biochem. Mol. Biol.">
        <title>Molecular analyses of the metallothionein gene family in rice (Oryza sativa L.).</title>
        <authorList>
            <person name="Zhou G."/>
            <person name="Xu Y."/>
            <person name="Li J."/>
            <person name="Yang L."/>
            <person name="Liu J.-Y."/>
        </authorList>
    </citation>
    <scope>GENE FAMILY</scope>
    <scope>TISSUE SPECIFICITY</scope>
</reference>
<comment type="function">
    <text evidence="2">Metallothioneins have a high content of cysteine residues that bind various heavy metals.</text>
</comment>
<comment type="tissue specificity">
    <text evidence="1">Expressed in roots.</text>
</comment>
<comment type="similarity">
    <text evidence="2">Belongs to the metallothionein superfamily. Type 15 family.</text>
</comment>
<comment type="sequence caution" evidence="2">
    <conflict type="erroneous gene model prediction">
        <sequence resource="EMBL-CDS" id="BAF30084"/>
    </conflict>
</comment>
<sequence length="79" mass="7720">MSCGGSCNCGSCGCGGGCGKMYPDLAEKITTTTTTATTVLGVAPEKGHFEVMVGKAAESGEAAHGCSCGSSCKCNPCNC</sequence>
<name>MT4B_ORYSJ</name>